<keyword id="KW-0226">DNA condensation</keyword>
<keyword id="KW-0238">DNA-binding</keyword>
<keyword id="KW-0843">Virulence</keyword>
<reference key="1">
    <citation type="journal article" date="2002" name="Proc. Natl. Acad. Sci. U.S.A.">
        <title>Genome sequence of a serotype M3 strain of group A Streptococcus: phage-encoded toxins, the high-virulence phenotype, and clone emergence.</title>
        <authorList>
            <person name="Beres S.B."/>
            <person name="Sylva G.L."/>
            <person name="Barbian K.D."/>
            <person name="Lei B."/>
            <person name="Hoff J.S."/>
            <person name="Mammarella N.D."/>
            <person name="Liu M.-Y."/>
            <person name="Smoot J.C."/>
            <person name="Porcella S.F."/>
            <person name="Parkins L.D."/>
            <person name="Campbell D.S."/>
            <person name="Smith T.M."/>
            <person name="McCormick J.K."/>
            <person name="Leung D.Y.M."/>
            <person name="Schlievert P.M."/>
            <person name="Musser J.M."/>
        </authorList>
    </citation>
    <scope>NUCLEOTIDE SEQUENCE [LARGE SCALE GENOMIC DNA]</scope>
    <source>
        <strain>ATCC BAA-595 / MGAS315</strain>
    </source>
</reference>
<dbReference type="EMBL" id="AE014074">
    <property type="protein sequence ID" value="AAM79753.1"/>
    <property type="molecule type" value="Genomic_DNA"/>
</dbReference>
<dbReference type="RefSeq" id="WP_002983920.1">
    <property type="nucleotide sequence ID" value="NC_004070.1"/>
</dbReference>
<dbReference type="SMR" id="P0DB64"/>
<dbReference type="KEGG" id="spg:SpyM3_1146"/>
<dbReference type="HOGENOM" id="CLU_105066_3_1_9"/>
<dbReference type="Proteomes" id="UP000000564">
    <property type="component" value="Chromosome"/>
</dbReference>
<dbReference type="GO" id="GO:0005829">
    <property type="term" value="C:cytosol"/>
    <property type="evidence" value="ECO:0007669"/>
    <property type="project" value="TreeGrafter"/>
</dbReference>
<dbReference type="GO" id="GO:0003677">
    <property type="term" value="F:DNA binding"/>
    <property type="evidence" value="ECO:0007669"/>
    <property type="project" value="UniProtKB-KW"/>
</dbReference>
<dbReference type="GO" id="GO:0030527">
    <property type="term" value="F:structural constituent of chromatin"/>
    <property type="evidence" value="ECO:0007669"/>
    <property type="project" value="InterPro"/>
</dbReference>
<dbReference type="GO" id="GO:0030261">
    <property type="term" value="P:chromosome condensation"/>
    <property type="evidence" value="ECO:0007669"/>
    <property type="project" value="UniProtKB-KW"/>
</dbReference>
<dbReference type="CDD" id="cd13831">
    <property type="entry name" value="HU"/>
    <property type="match status" value="1"/>
</dbReference>
<dbReference type="FunFam" id="4.10.520.10:FF:000001">
    <property type="entry name" value="DNA-binding protein HU"/>
    <property type="match status" value="1"/>
</dbReference>
<dbReference type="Gene3D" id="4.10.520.10">
    <property type="entry name" value="IHF-like DNA-binding proteins"/>
    <property type="match status" value="1"/>
</dbReference>
<dbReference type="InterPro" id="IPR000119">
    <property type="entry name" value="Hist_DNA-bd"/>
</dbReference>
<dbReference type="InterPro" id="IPR020816">
    <property type="entry name" value="Histone-like_DNA-bd_CS"/>
</dbReference>
<dbReference type="InterPro" id="IPR010992">
    <property type="entry name" value="IHF-like_DNA-bd_dom_sf"/>
</dbReference>
<dbReference type="PANTHER" id="PTHR33175">
    <property type="entry name" value="DNA-BINDING PROTEIN HU"/>
    <property type="match status" value="1"/>
</dbReference>
<dbReference type="PANTHER" id="PTHR33175:SF3">
    <property type="entry name" value="DNA-BINDING PROTEIN HU-BETA"/>
    <property type="match status" value="1"/>
</dbReference>
<dbReference type="Pfam" id="PF00216">
    <property type="entry name" value="Bac_DNA_binding"/>
    <property type="match status" value="1"/>
</dbReference>
<dbReference type="PRINTS" id="PR01727">
    <property type="entry name" value="DNABINDINGHU"/>
</dbReference>
<dbReference type="SMART" id="SM00411">
    <property type="entry name" value="BHL"/>
    <property type="match status" value="1"/>
</dbReference>
<dbReference type="SUPFAM" id="SSF47729">
    <property type="entry name" value="IHF-like DNA-binding proteins"/>
    <property type="match status" value="1"/>
</dbReference>
<dbReference type="PROSITE" id="PS00045">
    <property type="entry name" value="HISTONE_LIKE"/>
    <property type="match status" value="1"/>
</dbReference>
<protein>
    <recommendedName>
        <fullName>DNA-binding protein HU</fullName>
    </recommendedName>
</protein>
<organism>
    <name type="scientific">Streptococcus pyogenes serotype M3 (strain ATCC BAA-595 / MGAS315)</name>
    <dbReference type="NCBI Taxonomy" id="198466"/>
    <lineage>
        <taxon>Bacteria</taxon>
        <taxon>Bacillati</taxon>
        <taxon>Bacillota</taxon>
        <taxon>Bacilli</taxon>
        <taxon>Lactobacillales</taxon>
        <taxon>Streptococcaceae</taxon>
        <taxon>Streptococcus</taxon>
    </lineage>
</organism>
<evidence type="ECO:0000250" key="1"/>
<evidence type="ECO:0000305" key="2"/>
<accession>P0DB64</accession>
<accession>P0A3I0</accession>
<accession>Q9XB23</accession>
<comment type="function">
    <text evidence="1">Histone-like DNA-binding protein which is capable of wrapping DNA to stabilize it, and thus to prevent its denaturation under extreme environmental conditions. Also seems to act as a fortuitous virulence factor in delayed sequelae by binding to heparan sulfate-proteoglycans in the extracellular matrix of target organs and acting as a nidus for in situ immune complex formation (By similarity).</text>
</comment>
<comment type="similarity">
    <text evidence="2">Belongs to the bacterial histone-like protein family.</text>
</comment>
<name>DBH_STRP3</name>
<gene>
    <name type="primary">hup</name>
    <name type="synonym">hlpA</name>
    <name type="ordered locus">SpyM3_1146</name>
</gene>
<feature type="chain" id="PRO_0000104983" description="DNA-binding protein HU">
    <location>
        <begin position="1"/>
        <end position="91"/>
    </location>
</feature>
<sequence>MANKQDLIAKVAEATELTKKDSAAAVDAVFSTIEAFLAEGEKVQLIGFGNFEVRERAARKGRNPQTGAEIEIAASKVPAFKAGKALKDAVK</sequence>
<proteinExistence type="inferred from homology"/>